<accession>P59464</accession>
<name>DCD_BUCBP</name>
<reference key="1">
    <citation type="journal article" date="2003" name="Proc. Natl. Acad. Sci. U.S.A.">
        <title>Reductive genome evolution in Buchnera aphidicola.</title>
        <authorList>
            <person name="van Ham R.C.H.J."/>
            <person name="Kamerbeek J."/>
            <person name="Palacios C."/>
            <person name="Rausell C."/>
            <person name="Abascal F."/>
            <person name="Bastolla U."/>
            <person name="Fernandez J.M."/>
            <person name="Jimenez L."/>
            <person name="Postigo M."/>
            <person name="Silva F.J."/>
            <person name="Tamames J."/>
            <person name="Viguera E."/>
            <person name="Latorre A."/>
            <person name="Valencia A."/>
            <person name="Moran F."/>
            <person name="Moya A."/>
        </authorList>
    </citation>
    <scope>NUCLEOTIDE SEQUENCE [LARGE SCALE GENOMIC DNA]</scope>
    <source>
        <strain>Bp</strain>
    </source>
</reference>
<feature type="chain" id="PRO_0000155971" description="dCTP deaminase">
    <location>
        <begin position="1"/>
        <end position="193"/>
    </location>
</feature>
<feature type="active site" description="Proton donor/acceptor" evidence="1">
    <location>
        <position position="138"/>
    </location>
</feature>
<feature type="binding site" evidence="1">
    <location>
        <begin position="110"/>
        <end position="115"/>
    </location>
    <ligand>
        <name>dCTP</name>
        <dbReference type="ChEBI" id="CHEBI:61481"/>
    </ligand>
</feature>
<feature type="binding site" evidence="1">
    <location>
        <position position="128"/>
    </location>
    <ligand>
        <name>dCTP</name>
        <dbReference type="ChEBI" id="CHEBI:61481"/>
    </ligand>
</feature>
<feature type="binding site" evidence="1">
    <location>
        <begin position="136"/>
        <end position="138"/>
    </location>
    <ligand>
        <name>dCTP</name>
        <dbReference type="ChEBI" id="CHEBI:61481"/>
    </ligand>
</feature>
<feature type="binding site" evidence="1">
    <location>
        <position position="171"/>
    </location>
    <ligand>
        <name>dCTP</name>
        <dbReference type="ChEBI" id="CHEBI:61481"/>
    </ligand>
</feature>
<feature type="binding site" evidence="1">
    <location>
        <position position="178"/>
    </location>
    <ligand>
        <name>dCTP</name>
        <dbReference type="ChEBI" id="CHEBI:61481"/>
    </ligand>
</feature>
<feature type="binding site" evidence="1">
    <location>
        <position position="182"/>
    </location>
    <ligand>
        <name>dCTP</name>
        <dbReference type="ChEBI" id="CHEBI:61481"/>
    </ligand>
</feature>
<keyword id="KW-0378">Hydrolase</keyword>
<keyword id="KW-0546">Nucleotide metabolism</keyword>
<keyword id="KW-0547">Nucleotide-binding</keyword>
<keyword id="KW-1185">Reference proteome</keyword>
<comment type="function">
    <text evidence="1">Catalyzes the deamination of dCTP to dUTP.</text>
</comment>
<comment type="catalytic activity">
    <reaction evidence="1">
        <text>dCTP + H2O + H(+) = dUTP + NH4(+)</text>
        <dbReference type="Rhea" id="RHEA:22680"/>
        <dbReference type="ChEBI" id="CHEBI:15377"/>
        <dbReference type="ChEBI" id="CHEBI:15378"/>
        <dbReference type="ChEBI" id="CHEBI:28938"/>
        <dbReference type="ChEBI" id="CHEBI:61481"/>
        <dbReference type="ChEBI" id="CHEBI:61555"/>
        <dbReference type="EC" id="3.5.4.13"/>
    </reaction>
</comment>
<comment type="pathway">
    <text evidence="1">Pyrimidine metabolism; dUMP biosynthesis; dUMP from dCTP (dUTP route): step 1/2.</text>
</comment>
<comment type="subunit">
    <text evidence="1">Homotrimer.</text>
</comment>
<comment type="similarity">
    <text evidence="1">Belongs to the dCTP deaminase family.</text>
</comment>
<sequence length="193" mass="22111">MRLSDRDIELWIKNKKLVIEPIPNKELIHGVTIDVRLGNEFYTFCNKFNKNIDLSKSRNEISKILKKVMNKKHIIPNDHVFLLKPGMFVLAITLEKIFLPNNLVGWLDGRSSLARLGLMIHATSHRIDPGWGGNIVLEFFNSSNMILSLCPGMLIAAVSFEILSSPSIRPYNIRKNAKYFNQSEVTFSRIDQD</sequence>
<dbReference type="EC" id="3.5.4.13" evidence="1"/>
<dbReference type="EMBL" id="AE016826">
    <property type="protein sequence ID" value="AAO26837.1"/>
    <property type="molecule type" value="Genomic_DNA"/>
</dbReference>
<dbReference type="RefSeq" id="WP_011091238.1">
    <property type="nucleotide sequence ID" value="NC_004545.1"/>
</dbReference>
<dbReference type="SMR" id="P59464"/>
<dbReference type="STRING" id="224915.bbp_102"/>
<dbReference type="KEGG" id="bab:bbp_102"/>
<dbReference type="eggNOG" id="COG0717">
    <property type="taxonomic scope" value="Bacteria"/>
</dbReference>
<dbReference type="HOGENOM" id="CLU_087476_2_0_6"/>
<dbReference type="OrthoDB" id="9780956at2"/>
<dbReference type="UniPathway" id="UPA00610">
    <property type="reaction ID" value="UER00665"/>
</dbReference>
<dbReference type="Proteomes" id="UP000000601">
    <property type="component" value="Chromosome"/>
</dbReference>
<dbReference type="GO" id="GO:0008829">
    <property type="term" value="F:dCTP deaminase activity"/>
    <property type="evidence" value="ECO:0007669"/>
    <property type="project" value="UniProtKB-UniRule"/>
</dbReference>
<dbReference type="GO" id="GO:0000166">
    <property type="term" value="F:nucleotide binding"/>
    <property type="evidence" value="ECO:0007669"/>
    <property type="project" value="UniProtKB-KW"/>
</dbReference>
<dbReference type="GO" id="GO:0006226">
    <property type="term" value="P:dUMP biosynthetic process"/>
    <property type="evidence" value="ECO:0007669"/>
    <property type="project" value="UniProtKB-UniPathway"/>
</dbReference>
<dbReference type="GO" id="GO:0006229">
    <property type="term" value="P:dUTP biosynthetic process"/>
    <property type="evidence" value="ECO:0007669"/>
    <property type="project" value="UniProtKB-UniRule"/>
</dbReference>
<dbReference type="GO" id="GO:0015949">
    <property type="term" value="P:nucleobase-containing small molecule interconversion"/>
    <property type="evidence" value="ECO:0007669"/>
    <property type="project" value="TreeGrafter"/>
</dbReference>
<dbReference type="CDD" id="cd07557">
    <property type="entry name" value="trimeric_dUTPase"/>
    <property type="match status" value="1"/>
</dbReference>
<dbReference type="Gene3D" id="2.70.40.10">
    <property type="match status" value="1"/>
</dbReference>
<dbReference type="HAMAP" id="MF_00146">
    <property type="entry name" value="dCTP_deaminase"/>
    <property type="match status" value="1"/>
</dbReference>
<dbReference type="InterPro" id="IPR011962">
    <property type="entry name" value="dCTP_deaminase"/>
</dbReference>
<dbReference type="InterPro" id="IPR036157">
    <property type="entry name" value="dUTPase-like_sf"/>
</dbReference>
<dbReference type="InterPro" id="IPR033704">
    <property type="entry name" value="dUTPase_trimeric"/>
</dbReference>
<dbReference type="NCBIfam" id="TIGR02274">
    <property type="entry name" value="dCTP_deam"/>
    <property type="match status" value="1"/>
</dbReference>
<dbReference type="PANTHER" id="PTHR42680">
    <property type="entry name" value="DCTP DEAMINASE"/>
    <property type="match status" value="1"/>
</dbReference>
<dbReference type="PANTHER" id="PTHR42680:SF3">
    <property type="entry name" value="DCTP DEAMINASE"/>
    <property type="match status" value="1"/>
</dbReference>
<dbReference type="Pfam" id="PF22769">
    <property type="entry name" value="DCD"/>
    <property type="match status" value="1"/>
</dbReference>
<dbReference type="SUPFAM" id="SSF51283">
    <property type="entry name" value="dUTPase-like"/>
    <property type="match status" value="1"/>
</dbReference>
<proteinExistence type="inferred from homology"/>
<gene>
    <name evidence="1" type="primary">dcd</name>
    <name type="ordered locus">bbp_102</name>
</gene>
<evidence type="ECO:0000255" key="1">
    <source>
        <dbReference type="HAMAP-Rule" id="MF_00146"/>
    </source>
</evidence>
<organism>
    <name type="scientific">Buchnera aphidicola subsp. Baizongia pistaciae (strain Bp)</name>
    <dbReference type="NCBI Taxonomy" id="224915"/>
    <lineage>
        <taxon>Bacteria</taxon>
        <taxon>Pseudomonadati</taxon>
        <taxon>Pseudomonadota</taxon>
        <taxon>Gammaproteobacteria</taxon>
        <taxon>Enterobacterales</taxon>
        <taxon>Erwiniaceae</taxon>
        <taxon>Buchnera</taxon>
    </lineage>
</organism>
<protein>
    <recommendedName>
        <fullName evidence="1">dCTP deaminase</fullName>
        <ecNumber evidence="1">3.5.4.13</ecNumber>
    </recommendedName>
    <alternativeName>
        <fullName evidence="1">Deoxycytidine triphosphate deaminase</fullName>
    </alternativeName>
</protein>